<gene>
    <name evidence="1" type="primary">rtcA</name>
    <name type="ordered locus">STK_05700</name>
</gene>
<reference key="1">
    <citation type="journal article" date="2001" name="DNA Res.">
        <title>Complete genome sequence of an aerobic thermoacidophilic Crenarchaeon, Sulfolobus tokodaii strain7.</title>
        <authorList>
            <person name="Kawarabayasi Y."/>
            <person name="Hino Y."/>
            <person name="Horikawa H."/>
            <person name="Jin-no K."/>
            <person name="Takahashi M."/>
            <person name="Sekine M."/>
            <person name="Baba S."/>
            <person name="Ankai A."/>
            <person name="Kosugi H."/>
            <person name="Hosoyama A."/>
            <person name="Fukui S."/>
            <person name="Nagai Y."/>
            <person name="Nishijima K."/>
            <person name="Otsuka R."/>
            <person name="Nakazawa H."/>
            <person name="Takamiya M."/>
            <person name="Kato Y."/>
            <person name="Yoshizawa T."/>
            <person name="Tanaka T."/>
            <person name="Kudoh Y."/>
            <person name="Yamazaki J."/>
            <person name="Kushida N."/>
            <person name="Oguchi A."/>
            <person name="Aoki K."/>
            <person name="Masuda S."/>
            <person name="Yanagii M."/>
            <person name="Nishimura M."/>
            <person name="Yamagishi A."/>
            <person name="Oshima T."/>
            <person name="Kikuchi H."/>
        </authorList>
    </citation>
    <scope>NUCLEOTIDE SEQUENCE [LARGE SCALE GENOMIC DNA]</scope>
    <source>
        <strain>DSM 16993 / JCM 10545 / NBRC 100140 / 7</strain>
    </source>
</reference>
<reference key="2">
    <citation type="journal article" date="2008" name="Nucleic Acids Symp. Ser.">
        <title>Crystal structures of RNA 3'-terminal phosphate cyclase and its complexes with Mg2+ +ATP, ATP or Mn2+.</title>
        <authorList>
            <person name="Shimizu S."/>
            <person name="Ohki M."/>
            <person name="Ohkubo N."/>
            <person name="Suzuki K."/>
            <person name="Tsunoda M."/>
            <person name="Sekiguchi T."/>
            <person name="Takenaka A."/>
        </authorList>
    </citation>
    <scope>CRYSTALLIZATION OF CYCLASE IN COMPLEX WITH AMP</scope>
    <scope>ACTIVE SITE</scope>
</reference>
<reference key="3">
    <citation type="journal article" date="2009" name="Acta Crystallogr. F">
        <title>Crystallization and preliminary crystallographic studies of putative RNA 3'-terminal phosphate cyclase from the crenarchaeon Sulfolobus tokodaii.</title>
        <authorList>
            <person name="Shimizu S."/>
            <person name="Ohki M."/>
            <person name="Okubo N."/>
            <person name="Suzuki K."/>
            <person name="Tsunoda M."/>
            <person name="Sekiguchi T."/>
            <person name="Takenaka A."/>
        </authorList>
    </citation>
    <scope>CRYSTALLIZATION</scope>
</reference>
<evidence type="ECO:0000255" key="1">
    <source>
        <dbReference type="HAMAP-Rule" id="MF_00200"/>
    </source>
</evidence>
<evidence type="ECO:0000269" key="2">
    <source>
    </source>
</evidence>
<proteinExistence type="evidence at protein level"/>
<dbReference type="EC" id="6.5.1.4" evidence="1"/>
<dbReference type="EMBL" id="BA000023">
    <property type="protein sequence ID" value="BAB65566.1"/>
    <property type="molecule type" value="Genomic_DNA"/>
</dbReference>
<dbReference type="RefSeq" id="WP_010978549.1">
    <property type="nucleotide sequence ID" value="NC_003106.2"/>
</dbReference>
<dbReference type="SMR" id="Q974U1"/>
<dbReference type="STRING" id="273063.STK_05700"/>
<dbReference type="GeneID" id="1458516"/>
<dbReference type="KEGG" id="sto:STK_05700"/>
<dbReference type="PATRIC" id="fig|273063.9.peg.652"/>
<dbReference type="eggNOG" id="arCOG04125">
    <property type="taxonomic scope" value="Archaea"/>
</dbReference>
<dbReference type="OrthoDB" id="7994at2157"/>
<dbReference type="Proteomes" id="UP000001015">
    <property type="component" value="Chromosome"/>
</dbReference>
<dbReference type="GO" id="GO:0005737">
    <property type="term" value="C:cytoplasm"/>
    <property type="evidence" value="ECO:0007669"/>
    <property type="project" value="UniProtKB-SubCell"/>
</dbReference>
<dbReference type="GO" id="GO:0005524">
    <property type="term" value="F:ATP binding"/>
    <property type="evidence" value="ECO:0007669"/>
    <property type="project" value="UniProtKB-KW"/>
</dbReference>
<dbReference type="GO" id="GO:0003963">
    <property type="term" value="F:RNA-3'-phosphate cyclase activity"/>
    <property type="evidence" value="ECO:0007669"/>
    <property type="project" value="UniProtKB-UniRule"/>
</dbReference>
<dbReference type="GO" id="GO:0006396">
    <property type="term" value="P:RNA processing"/>
    <property type="evidence" value="ECO:0007669"/>
    <property type="project" value="InterPro"/>
</dbReference>
<dbReference type="CDD" id="cd00874">
    <property type="entry name" value="RNA_Cyclase_Class_II"/>
    <property type="match status" value="1"/>
</dbReference>
<dbReference type="FunFam" id="3.30.360.20:FF:000002">
    <property type="entry name" value="RNA terminal phosphate cyclase-like 1"/>
    <property type="match status" value="1"/>
</dbReference>
<dbReference type="Gene3D" id="3.65.10.20">
    <property type="entry name" value="RNA 3'-terminal phosphate cyclase domain"/>
    <property type="match status" value="1"/>
</dbReference>
<dbReference type="Gene3D" id="3.30.360.20">
    <property type="entry name" value="RNA 3'-terminal phosphate cyclase, insert domain"/>
    <property type="match status" value="1"/>
</dbReference>
<dbReference type="HAMAP" id="MF_00200">
    <property type="entry name" value="RTC"/>
    <property type="match status" value="1"/>
</dbReference>
<dbReference type="InterPro" id="IPR013791">
    <property type="entry name" value="RNA3'-term_phos_cycl_insert"/>
</dbReference>
<dbReference type="InterPro" id="IPR023797">
    <property type="entry name" value="RNA3'_phos_cyclase_dom"/>
</dbReference>
<dbReference type="InterPro" id="IPR037136">
    <property type="entry name" value="RNA3'_phos_cyclase_dom_sf"/>
</dbReference>
<dbReference type="InterPro" id="IPR000228">
    <property type="entry name" value="RNA3'_term_phos_cyc"/>
</dbReference>
<dbReference type="InterPro" id="IPR017770">
    <property type="entry name" value="RNA3'_term_phos_cyc_type_1"/>
</dbReference>
<dbReference type="InterPro" id="IPR020719">
    <property type="entry name" value="RNA3'_term_phos_cycl-like_CS"/>
</dbReference>
<dbReference type="InterPro" id="IPR013792">
    <property type="entry name" value="RNA3'P_cycl/enolpyr_Trfase_a/b"/>
</dbReference>
<dbReference type="InterPro" id="IPR036553">
    <property type="entry name" value="RPTC_insert"/>
</dbReference>
<dbReference type="NCBIfam" id="TIGR03399">
    <property type="entry name" value="RNA_3prim_cycl"/>
    <property type="match status" value="1"/>
</dbReference>
<dbReference type="PANTHER" id="PTHR11096">
    <property type="entry name" value="RNA 3' TERMINAL PHOSPHATE CYCLASE"/>
    <property type="match status" value="1"/>
</dbReference>
<dbReference type="PANTHER" id="PTHR11096:SF0">
    <property type="entry name" value="RNA 3'-TERMINAL PHOSPHATE CYCLASE"/>
    <property type="match status" value="1"/>
</dbReference>
<dbReference type="Pfam" id="PF01137">
    <property type="entry name" value="RTC"/>
    <property type="match status" value="1"/>
</dbReference>
<dbReference type="Pfam" id="PF05189">
    <property type="entry name" value="RTC_insert"/>
    <property type="match status" value="1"/>
</dbReference>
<dbReference type="PIRSF" id="PIRSF005378">
    <property type="entry name" value="RNA3'_term_phos_cycl_euk"/>
    <property type="match status" value="1"/>
</dbReference>
<dbReference type="SUPFAM" id="SSF55205">
    <property type="entry name" value="EPT/RTPC-like"/>
    <property type="match status" value="1"/>
</dbReference>
<dbReference type="PROSITE" id="PS01287">
    <property type="entry name" value="RTC"/>
    <property type="match status" value="1"/>
</dbReference>
<protein>
    <recommendedName>
        <fullName evidence="1">RNA 3'-terminal phosphate cyclase</fullName>
        <shortName evidence="1">RNA cyclase</shortName>
        <shortName evidence="1">RNA-3'-phosphate cyclase</shortName>
        <ecNumber evidence="1">6.5.1.4</ecNumber>
    </recommendedName>
</protein>
<keyword id="KW-0067">ATP-binding</keyword>
<keyword id="KW-0963">Cytoplasm</keyword>
<keyword id="KW-0436">Ligase</keyword>
<keyword id="KW-0547">Nucleotide-binding</keyword>
<keyword id="KW-1185">Reference proteome</keyword>
<comment type="function">
    <text evidence="1">Catalyzes the conversion of 3'-phosphate to a 2',3'-cyclic phosphodiester at the end of RNA. The mechanism of action of the enzyme occurs in 3 steps: (A) adenylation of the enzyme by ATP; (B) transfer of adenylate to an RNA-N3'P to produce RNA-N3'PP5'A; (C) and attack of the adjacent 2'-hydroxyl on the 3'-phosphorus in the diester linkage to produce the cyclic end product. The biological role of this enzyme is unknown but it is likely to function in some aspects of cellular RNA processing.</text>
</comment>
<comment type="catalytic activity">
    <reaction evidence="1">
        <text>a 3'-end 3'-phospho-ribonucleotide-RNA + ATP = a 3'-end 2',3'-cyclophospho-ribonucleotide-RNA + AMP + diphosphate</text>
        <dbReference type="Rhea" id="RHEA:23976"/>
        <dbReference type="Rhea" id="RHEA-COMP:10463"/>
        <dbReference type="Rhea" id="RHEA-COMP:10464"/>
        <dbReference type="ChEBI" id="CHEBI:30616"/>
        <dbReference type="ChEBI" id="CHEBI:33019"/>
        <dbReference type="ChEBI" id="CHEBI:83062"/>
        <dbReference type="ChEBI" id="CHEBI:83064"/>
        <dbReference type="ChEBI" id="CHEBI:456215"/>
        <dbReference type="EC" id="6.5.1.4"/>
    </reaction>
</comment>
<comment type="subcellular location">
    <subcellularLocation>
        <location evidence="1">Cytoplasm</location>
    </subcellularLocation>
</comment>
<comment type="similarity">
    <text evidence="1">Belongs to the RNA 3'-terminal cyclase family. Type 1 subfamily.</text>
</comment>
<organism>
    <name type="scientific">Sulfurisphaera tokodaii (strain DSM 16993 / JCM 10545 / NBRC 100140 / 7)</name>
    <name type="common">Sulfolobus tokodaii</name>
    <dbReference type="NCBI Taxonomy" id="273063"/>
    <lineage>
        <taxon>Archaea</taxon>
        <taxon>Thermoproteota</taxon>
        <taxon>Thermoprotei</taxon>
        <taxon>Sulfolobales</taxon>
        <taxon>Sulfolobaceae</taxon>
        <taxon>Sulfurisphaera</taxon>
    </lineage>
</organism>
<feature type="chain" id="PRO_0000156437" description="RNA 3'-terminal phosphate cyclase">
    <location>
        <begin position="1"/>
        <end position="339"/>
    </location>
</feature>
<feature type="active site" description="Tele-AMP-histidine intermediate" evidence="1 2">
    <location>
        <position position="307"/>
    </location>
</feature>
<feature type="binding site" evidence="1">
    <location>
        <position position="101"/>
    </location>
    <ligand>
        <name>ATP</name>
        <dbReference type="ChEBI" id="CHEBI:30616"/>
    </ligand>
</feature>
<feature type="binding site" evidence="1">
    <location>
        <begin position="283"/>
        <end position="286"/>
    </location>
    <ligand>
        <name>ATP</name>
        <dbReference type="ChEBI" id="CHEBI:30616"/>
    </ligand>
</feature>
<name>RTCA_SULTO</name>
<accession>Q974U1</accession>
<sequence length="339" mass="37505">MIEIDGSFGEGGGQILRTSLTLSALTKKPFRIYKIRANRPKPGLQRQHLTAVEAVKKLTNAKVKGDFVGSTELVFEPEDIVEKGDFEFDVGTAGSVTLILQTILPLLINRNIKVTIKGGTDVPKSPSIDYIRLTFLSLLEKIGIRVNLILIRRGHYPEGGGEIKITEVKGNPSSFSLMERGELLMIKGISHVSSLPSHIAERQAKSAKEFLLSKIKIPVEIEIDVRENERSKGSGIALTAIFEKTFLGSDSLGEKGKRAEIVGEEAAKSIYEEIISNATVDRHMSDMLMLYASLYYGEYIGSELTSHARTNSEIIKKFLNVNIQISGEKPFIFRAKKEL</sequence>